<reference key="1">
    <citation type="journal article" date="1998" name="Microbiology">
        <title>The yvsA-yvqA (293 degrees - 289 degrees) region of the Bacillus subtilis chromosome containing genes involved in metal ion uptake and a putative sigma factor.</title>
        <authorList>
            <person name="Wipat A."/>
            <person name="Brignell C.S."/>
            <person name="Guy J.B."/>
            <person name="Rose M."/>
            <person name="Emmerson P.T."/>
            <person name="Harwood C.R."/>
        </authorList>
    </citation>
    <scope>NUCLEOTIDE SEQUENCE [GENOMIC DNA]</scope>
    <source>
        <strain>168</strain>
    </source>
</reference>
<reference key="2">
    <citation type="journal article" date="1997" name="Nature">
        <title>The complete genome sequence of the Gram-positive bacterium Bacillus subtilis.</title>
        <authorList>
            <person name="Kunst F."/>
            <person name="Ogasawara N."/>
            <person name="Moszer I."/>
            <person name="Albertini A.M."/>
            <person name="Alloni G."/>
            <person name="Azevedo V."/>
            <person name="Bertero M.G."/>
            <person name="Bessieres P."/>
            <person name="Bolotin A."/>
            <person name="Borchert S."/>
            <person name="Borriss R."/>
            <person name="Boursier L."/>
            <person name="Brans A."/>
            <person name="Braun M."/>
            <person name="Brignell S.C."/>
            <person name="Bron S."/>
            <person name="Brouillet S."/>
            <person name="Bruschi C.V."/>
            <person name="Caldwell B."/>
            <person name="Capuano V."/>
            <person name="Carter N.M."/>
            <person name="Choi S.-K."/>
            <person name="Codani J.-J."/>
            <person name="Connerton I.F."/>
            <person name="Cummings N.J."/>
            <person name="Daniel R.A."/>
            <person name="Denizot F."/>
            <person name="Devine K.M."/>
            <person name="Duesterhoeft A."/>
            <person name="Ehrlich S.D."/>
            <person name="Emmerson P.T."/>
            <person name="Entian K.-D."/>
            <person name="Errington J."/>
            <person name="Fabret C."/>
            <person name="Ferrari E."/>
            <person name="Foulger D."/>
            <person name="Fritz C."/>
            <person name="Fujita M."/>
            <person name="Fujita Y."/>
            <person name="Fuma S."/>
            <person name="Galizzi A."/>
            <person name="Galleron N."/>
            <person name="Ghim S.-Y."/>
            <person name="Glaser P."/>
            <person name="Goffeau A."/>
            <person name="Golightly E.J."/>
            <person name="Grandi G."/>
            <person name="Guiseppi G."/>
            <person name="Guy B.J."/>
            <person name="Haga K."/>
            <person name="Haiech J."/>
            <person name="Harwood C.R."/>
            <person name="Henaut A."/>
            <person name="Hilbert H."/>
            <person name="Holsappel S."/>
            <person name="Hosono S."/>
            <person name="Hullo M.-F."/>
            <person name="Itaya M."/>
            <person name="Jones L.-M."/>
            <person name="Joris B."/>
            <person name="Karamata D."/>
            <person name="Kasahara Y."/>
            <person name="Klaerr-Blanchard M."/>
            <person name="Klein C."/>
            <person name="Kobayashi Y."/>
            <person name="Koetter P."/>
            <person name="Koningstein G."/>
            <person name="Krogh S."/>
            <person name="Kumano M."/>
            <person name="Kurita K."/>
            <person name="Lapidus A."/>
            <person name="Lardinois S."/>
            <person name="Lauber J."/>
            <person name="Lazarevic V."/>
            <person name="Lee S.-M."/>
            <person name="Levine A."/>
            <person name="Liu H."/>
            <person name="Masuda S."/>
            <person name="Mauel C."/>
            <person name="Medigue C."/>
            <person name="Medina N."/>
            <person name="Mellado R.P."/>
            <person name="Mizuno M."/>
            <person name="Moestl D."/>
            <person name="Nakai S."/>
            <person name="Noback M."/>
            <person name="Noone D."/>
            <person name="O'Reilly M."/>
            <person name="Ogawa K."/>
            <person name="Ogiwara A."/>
            <person name="Oudega B."/>
            <person name="Park S.-H."/>
            <person name="Parro V."/>
            <person name="Pohl T.M."/>
            <person name="Portetelle D."/>
            <person name="Porwollik S."/>
            <person name="Prescott A.M."/>
            <person name="Presecan E."/>
            <person name="Pujic P."/>
            <person name="Purnelle B."/>
            <person name="Rapoport G."/>
            <person name="Rey M."/>
            <person name="Reynolds S."/>
            <person name="Rieger M."/>
            <person name="Rivolta C."/>
            <person name="Rocha E."/>
            <person name="Roche B."/>
            <person name="Rose M."/>
            <person name="Sadaie Y."/>
            <person name="Sato T."/>
            <person name="Scanlan E."/>
            <person name="Schleich S."/>
            <person name="Schroeter R."/>
            <person name="Scoffone F."/>
            <person name="Sekiguchi J."/>
            <person name="Sekowska A."/>
            <person name="Seror S.J."/>
            <person name="Serror P."/>
            <person name="Shin B.-S."/>
            <person name="Soldo B."/>
            <person name="Sorokin A."/>
            <person name="Tacconi E."/>
            <person name="Takagi T."/>
            <person name="Takahashi H."/>
            <person name="Takemaru K."/>
            <person name="Takeuchi M."/>
            <person name="Tamakoshi A."/>
            <person name="Tanaka T."/>
            <person name="Terpstra P."/>
            <person name="Tognoni A."/>
            <person name="Tosato V."/>
            <person name="Uchiyama S."/>
            <person name="Vandenbol M."/>
            <person name="Vannier F."/>
            <person name="Vassarotti A."/>
            <person name="Viari A."/>
            <person name="Wambutt R."/>
            <person name="Wedler E."/>
            <person name="Wedler H."/>
            <person name="Weitzenegger T."/>
            <person name="Winters P."/>
            <person name="Wipat A."/>
            <person name="Yamamoto H."/>
            <person name="Yamane K."/>
            <person name="Yasumoto K."/>
            <person name="Yata K."/>
            <person name="Yoshida K."/>
            <person name="Yoshikawa H.-F."/>
            <person name="Zumstein E."/>
            <person name="Yoshikawa H."/>
            <person name="Danchin A."/>
        </authorList>
    </citation>
    <scope>NUCLEOTIDE SEQUENCE [LARGE SCALE GENOMIC DNA]</scope>
    <source>
        <strain>168</strain>
    </source>
</reference>
<reference key="3">
    <citation type="journal article" date="2009" name="Microbiology">
        <title>From a consortium sequence to a unified sequence: the Bacillus subtilis 168 reference genome a decade later.</title>
        <authorList>
            <person name="Barbe V."/>
            <person name="Cruveiller S."/>
            <person name="Kunst F."/>
            <person name="Lenoble P."/>
            <person name="Meurice G."/>
            <person name="Sekowska A."/>
            <person name="Vallenet D."/>
            <person name="Wang T."/>
            <person name="Moszer I."/>
            <person name="Medigue C."/>
            <person name="Danchin A."/>
        </authorList>
    </citation>
    <scope>SEQUENCE REVISION TO 394-395</scope>
</reference>
<reference key="4">
    <citation type="journal article" date="2001" name="J. Bacteriol.">
        <title>Comprehensive DNA microarray analysis of Bacillus subtilis two-component regulatory systems.</title>
        <authorList>
            <person name="Kobayashi K."/>
            <person name="Ogura M."/>
            <person name="Yamaguchi H."/>
            <person name="Yoshida K."/>
            <person name="Ogasawara N."/>
            <person name="Tanaka T."/>
            <person name="Fujita Y."/>
        </authorList>
    </citation>
    <scope>FUNCTION</scope>
</reference>
<reference key="5">
    <citation type="journal article" date="2005" name="Biosci. Biotechnol. Biochem.">
        <title>Functional analysis of the YvrGHb two-component system of Bacillus subtilis: identification of the regulated genes by DNA microarray and northern blot analyses.</title>
        <authorList>
            <person name="Serizawa M."/>
            <person name="Kodama K."/>
            <person name="Yamamoto H."/>
            <person name="Kobayashi K."/>
            <person name="Ogasawara N."/>
            <person name="Sekiguchi J."/>
        </authorList>
    </citation>
    <scope>FUNCTION</scope>
</reference>
<feature type="chain" id="PRO_0000360787" description="Sensor histidine kinase YvrG">
    <location>
        <begin position="1"/>
        <end position="580"/>
    </location>
</feature>
<feature type="topological domain" description="Cytoplasmic" evidence="1">
    <location>
        <begin position="1"/>
        <end position="6"/>
    </location>
</feature>
<feature type="transmembrane region" description="Helical" evidence="1">
    <location>
        <begin position="7"/>
        <end position="27"/>
    </location>
</feature>
<feature type="topological domain" description="Extracellular" evidence="1">
    <location>
        <begin position="28"/>
        <end position="261"/>
    </location>
</feature>
<feature type="transmembrane region" description="Helical" evidence="1">
    <location>
        <begin position="262"/>
        <end position="282"/>
    </location>
</feature>
<feature type="topological domain" description="Cytoplasmic" evidence="1">
    <location>
        <begin position="283"/>
        <end position="580"/>
    </location>
</feature>
<feature type="domain" description="Histidine kinase" evidence="2">
    <location>
        <begin position="363"/>
        <end position="580"/>
    </location>
</feature>
<feature type="modified residue" description="Phosphohistidine; by autocatalysis" evidence="2">
    <location>
        <position position="366"/>
    </location>
</feature>
<feature type="sequence conflict" description="In Ref. 1; CAA11731." evidence="5" ref="1">
    <original>VK</original>
    <variation>GE</variation>
    <location>
        <begin position="394"/>
        <end position="395"/>
    </location>
</feature>
<sequence length="580" mass="67799">MRLRWKFLFHFFGQMLIVILLLTVMLVASFFYLDARFSDAESNSGLTKATTDTLEAYLDVNEDGTWEVDNFLKKSVDKQHGWMQIIDSEGNTDYSYGVPKDVPGTYTKKELLSIYKTKKLHNYKLNYWAINIEDKSYLLLSGWKSKSEQLLTSVEKREQKIDSLAHYKSSTIDYIKRKKGAIYLLDSNGKILDSINSTKSERKTMNQLELLKYSSKPWNYKREISVKILNKDRWMVATVPNPVYVTDQEFNKSFLKVVLKAMFLVMAVLFMYIIWMTVWYMFRFGLPIFHTIRWLVNLSKGKLEEPRNREGRPVSKNKKGKIKQPYRFFGEIFESMDQLTETLRRDKRNREKIQATREEWIAGLSHDLKTPLSSIYGYSMMLESKQYDWSPEEVKEMGQVVREKSEYMSKLIEDLNLTYRLKNDALPIERKLTSLIPFFKNVIEDFKKNPFSEGYDISFVSKEEHIEFALDEAWFRRILENLLGNAVKHNGKGTEIQVILEQTKNHISLKVKDNGKGMDEETITHLFNRYYRGTNTKDSTAGTGLGLAIAKELVHLHNGTIHVNSRTNIGTVITILFKKQ</sequence>
<protein>
    <recommendedName>
        <fullName>Sensor histidine kinase YvrG</fullName>
        <ecNumber>2.7.13.3</ecNumber>
    </recommendedName>
</protein>
<organism>
    <name type="scientific">Bacillus subtilis (strain 168)</name>
    <dbReference type="NCBI Taxonomy" id="224308"/>
    <lineage>
        <taxon>Bacteria</taxon>
        <taxon>Bacillati</taxon>
        <taxon>Bacillota</taxon>
        <taxon>Bacilli</taxon>
        <taxon>Bacillales</taxon>
        <taxon>Bacillaceae</taxon>
        <taxon>Bacillus</taxon>
    </lineage>
</organism>
<dbReference type="EC" id="2.7.13.3"/>
<dbReference type="EMBL" id="AJ223978">
    <property type="protein sequence ID" value="CAA11731.1"/>
    <property type="status" value="ALT_INIT"/>
    <property type="molecule type" value="Genomic_DNA"/>
</dbReference>
<dbReference type="EMBL" id="AL009126">
    <property type="protein sequence ID" value="CAB15311.2"/>
    <property type="molecule type" value="Genomic_DNA"/>
</dbReference>
<dbReference type="PIR" id="B70047">
    <property type="entry name" value="B70047"/>
</dbReference>
<dbReference type="RefSeq" id="NP_391201.2">
    <property type="nucleotide sequence ID" value="NC_000964.3"/>
</dbReference>
<dbReference type="RefSeq" id="WP_003243980.1">
    <property type="nucleotide sequence ID" value="NZ_OZ025638.1"/>
</dbReference>
<dbReference type="SMR" id="O34989"/>
<dbReference type="FunCoup" id="O34989">
    <property type="interactions" value="64"/>
</dbReference>
<dbReference type="STRING" id="224308.BSU33210"/>
<dbReference type="PaxDb" id="224308-BSU33210"/>
<dbReference type="EnsemblBacteria" id="CAB15311">
    <property type="protein sequence ID" value="CAB15311"/>
    <property type="gene ID" value="BSU_33210"/>
</dbReference>
<dbReference type="GeneID" id="935985"/>
<dbReference type="KEGG" id="bsu:BSU33210"/>
<dbReference type="PATRIC" id="fig|224308.179.peg.3602"/>
<dbReference type="eggNOG" id="COG2205">
    <property type="taxonomic scope" value="Bacteria"/>
</dbReference>
<dbReference type="InParanoid" id="O34989"/>
<dbReference type="OrthoDB" id="368131at2"/>
<dbReference type="PhylomeDB" id="O34989"/>
<dbReference type="BioCyc" id="BSUB:BSU33210-MONOMER"/>
<dbReference type="Proteomes" id="UP000001570">
    <property type="component" value="Chromosome"/>
</dbReference>
<dbReference type="GO" id="GO:0005886">
    <property type="term" value="C:plasma membrane"/>
    <property type="evidence" value="ECO:0000318"/>
    <property type="project" value="GO_Central"/>
</dbReference>
<dbReference type="GO" id="GO:0005524">
    <property type="term" value="F:ATP binding"/>
    <property type="evidence" value="ECO:0007669"/>
    <property type="project" value="UniProtKB-KW"/>
</dbReference>
<dbReference type="GO" id="GO:0009927">
    <property type="term" value="F:histidine phosphotransfer kinase activity"/>
    <property type="evidence" value="ECO:0000318"/>
    <property type="project" value="GO_Central"/>
</dbReference>
<dbReference type="GO" id="GO:0000155">
    <property type="term" value="F:phosphorelay sensor kinase activity"/>
    <property type="evidence" value="ECO:0000318"/>
    <property type="project" value="GO_Central"/>
</dbReference>
<dbReference type="GO" id="GO:0000160">
    <property type="term" value="P:phosphorelay signal transduction system"/>
    <property type="evidence" value="ECO:0000318"/>
    <property type="project" value="GO_Central"/>
</dbReference>
<dbReference type="CDD" id="cd00082">
    <property type="entry name" value="HisKA"/>
    <property type="match status" value="1"/>
</dbReference>
<dbReference type="FunFam" id="3.30.565.10:FF:000006">
    <property type="entry name" value="Sensor histidine kinase WalK"/>
    <property type="match status" value="1"/>
</dbReference>
<dbReference type="FunFam" id="1.10.287.130:FF:000082">
    <property type="entry name" value="Sensor histidine kinase YvrG"/>
    <property type="match status" value="1"/>
</dbReference>
<dbReference type="Gene3D" id="1.10.287.130">
    <property type="match status" value="1"/>
</dbReference>
<dbReference type="Gene3D" id="3.30.565.10">
    <property type="entry name" value="Histidine kinase-like ATPase, C-terminal domain"/>
    <property type="match status" value="1"/>
</dbReference>
<dbReference type="InterPro" id="IPR050351">
    <property type="entry name" value="2-comp_sensor_kinase"/>
</dbReference>
<dbReference type="InterPro" id="IPR036890">
    <property type="entry name" value="HATPase_C_sf"/>
</dbReference>
<dbReference type="InterPro" id="IPR005467">
    <property type="entry name" value="His_kinase_dom"/>
</dbReference>
<dbReference type="InterPro" id="IPR003661">
    <property type="entry name" value="HisK_dim/P_dom"/>
</dbReference>
<dbReference type="InterPro" id="IPR036097">
    <property type="entry name" value="HisK_dim/P_sf"/>
</dbReference>
<dbReference type="InterPro" id="IPR004358">
    <property type="entry name" value="Sig_transdc_His_kin-like_C"/>
</dbReference>
<dbReference type="PANTHER" id="PTHR45453">
    <property type="entry name" value="PHOSPHATE REGULON SENSOR PROTEIN PHOR"/>
    <property type="match status" value="1"/>
</dbReference>
<dbReference type="PANTHER" id="PTHR45453:SF1">
    <property type="entry name" value="PHOSPHATE REGULON SENSOR PROTEIN PHOR"/>
    <property type="match status" value="1"/>
</dbReference>
<dbReference type="Pfam" id="PF02518">
    <property type="entry name" value="HATPase_c"/>
    <property type="match status" value="1"/>
</dbReference>
<dbReference type="Pfam" id="PF00512">
    <property type="entry name" value="HisKA"/>
    <property type="match status" value="1"/>
</dbReference>
<dbReference type="PRINTS" id="PR00344">
    <property type="entry name" value="BCTRLSENSOR"/>
</dbReference>
<dbReference type="SMART" id="SM00387">
    <property type="entry name" value="HATPase_c"/>
    <property type="match status" value="1"/>
</dbReference>
<dbReference type="SMART" id="SM00388">
    <property type="entry name" value="HisKA"/>
    <property type="match status" value="1"/>
</dbReference>
<dbReference type="SUPFAM" id="SSF55874">
    <property type="entry name" value="ATPase domain of HSP90 chaperone/DNA topoisomerase II/histidine kinase"/>
    <property type="match status" value="1"/>
</dbReference>
<dbReference type="SUPFAM" id="SSF47384">
    <property type="entry name" value="Homodimeric domain of signal transducing histidine kinase"/>
    <property type="match status" value="1"/>
</dbReference>
<dbReference type="PROSITE" id="PS50109">
    <property type="entry name" value="HIS_KIN"/>
    <property type="match status" value="1"/>
</dbReference>
<name>YVRG_BACSU</name>
<gene>
    <name type="primary">yvrG</name>
    <name type="ordered locus">BSU33210</name>
</gene>
<proteinExistence type="inferred from homology"/>
<keyword id="KW-0067">ATP-binding</keyword>
<keyword id="KW-1003">Cell membrane</keyword>
<keyword id="KW-0418">Kinase</keyword>
<keyword id="KW-0472">Membrane</keyword>
<keyword id="KW-0547">Nucleotide-binding</keyword>
<keyword id="KW-0597">Phosphoprotein</keyword>
<keyword id="KW-1185">Reference proteome</keyword>
<keyword id="KW-0808">Transferase</keyword>
<keyword id="KW-0812">Transmembrane</keyword>
<keyword id="KW-1133">Transmembrane helix</keyword>
<keyword id="KW-0902">Two-component regulatory system</keyword>
<accession>O34989</accession>
<accession>Q7B2K3</accession>
<evidence type="ECO:0000255" key="1"/>
<evidence type="ECO:0000255" key="2">
    <source>
        <dbReference type="PROSITE-ProRule" id="PRU00107"/>
    </source>
</evidence>
<evidence type="ECO:0000269" key="3">
    <source>
    </source>
</evidence>
<evidence type="ECO:0000269" key="4">
    <source>
    </source>
</evidence>
<evidence type="ECO:0000305" key="5"/>
<comment type="function">
    <text evidence="3 4">Member of the two-component regulatory system YvrG/YvrH that positively regulates 7 transcriptional units (wprA, wapA-yxxG, dltABCDE, sunA, sunT-bdbA-yolJ-bdbB, sigO-rsoA, and sigX-rsiX), and negatively regulates the lytABC operon. Probably activates YvrH by phosphorylation.</text>
</comment>
<comment type="catalytic activity">
    <reaction>
        <text>ATP + protein L-histidine = ADP + protein N-phospho-L-histidine.</text>
        <dbReference type="EC" id="2.7.13.3"/>
    </reaction>
</comment>
<comment type="subcellular location">
    <subcellularLocation>
        <location evidence="5">Cell membrane</location>
        <topology evidence="5">Multi-pass membrane protein</topology>
    </subcellularLocation>
</comment>
<comment type="sequence caution" evidence="5">
    <conflict type="erroneous initiation">
        <sequence resource="EMBL-CDS" id="CAA11731"/>
    </conflict>
</comment>